<comment type="function">
    <text evidence="1">Catalyzes a reversible aldol reaction between acetaldehyde and D-glyceraldehyde 3-phosphate to generate 2-deoxy-D-ribose 5-phosphate.</text>
</comment>
<comment type="catalytic activity">
    <reaction evidence="1">
        <text>2-deoxy-D-ribose 5-phosphate = D-glyceraldehyde 3-phosphate + acetaldehyde</text>
        <dbReference type="Rhea" id="RHEA:12821"/>
        <dbReference type="ChEBI" id="CHEBI:15343"/>
        <dbReference type="ChEBI" id="CHEBI:59776"/>
        <dbReference type="ChEBI" id="CHEBI:62877"/>
        <dbReference type="EC" id="4.1.2.4"/>
    </reaction>
</comment>
<comment type="pathway">
    <text evidence="1">Carbohydrate degradation; 2-deoxy-D-ribose 1-phosphate degradation; D-glyceraldehyde 3-phosphate and acetaldehyde from 2-deoxy-alpha-D-ribose 1-phosphate: step 2/2.</text>
</comment>
<comment type="subcellular location">
    <subcellularLocation>
        <location evidence="1">Cytoplasm</location>
    </subcellularLocation>
</comment>
<comment type="similarity">
    <text evidence="1">Belongs to the DeoC/FbaB aldolase family. DeoC type 2 subfamily.</text>
</comment>
<dbReference type="EC" id="4.1.2.4" evidence="1"/>
<dbReference type="EMBL" id="CP001252">
    <property type="protein sequence ID" value="ACK45655.1"/>
    <property type="molecule type" value="Genomic_DNA"/>
</dbReference>
<dbReference type="RefSeq" id="WP_006086931.1">
    <property type="nucleotide sequence ID" value="NC_011663.1"/>
</dbReference>
<dbReference type="SMR" id="B8E6P4"/>
<dbReference type="GeneID" id="11774917"/>
<dbReference type="KEGG" id="sbp:Sbal223_1140"/>
<dbReference type="HOGENOM" id="CLU_053595_3_1_6"/>
<dbReference type="UniPathway" id="UPA00002">
    <property type="reaction ID" value="UER00468"/>
</dbReference>
<dbReference type="Proteomes" id="UP000002507">
    <property type="component" value="Chromosome"/>
</dbReference>
<dbReference type="GO" id="GO:0005737">
    <property type="term" value="C:cytoplasm"/>
    <property type="evidence" value="ECO:0007669"/>
    <property type="project" value="UniProtKB-SubCell"/>
</dbReference>
<dbReference type="GO" id="GO:0004139">
    <property type="term" value="F:deoxyribose-phosphate aldolase activity"/>
    <property type="evidence" value="ECO:0007669"/>
    <property type="project" value="UniProtKB-UniRule"/>
</dbReference>
<dbReference type="GO" id="GO:0006018">
    <property type="term" value="P:2-deoxyribose 1-phosphate catabolic process"/>
    <property type="evidence" value="ECO:0007669"/>
    <property type="project" value="UniProtKB-UniRule"/>
</dbReference>
<dbReference type="GO" id="GO:0016052">
    <property type="term" value="P:carbohydrate catabolic process"/>
    <property type="evidence" value="ECO:0007669"/>
    <property type="project" value="TreeGrafter"/>
</dbReference>
<dbReference type="GO" id="GO:0009264">
    <property type="term" value="P:deoxyribonucleotide catabolic process"/>
    <property type="evidence" value="ECO:0007669"/>
    <property type="project" value="InterPro"/>
</dbReference>
<dbReference type="CDD" id="cd00959">
    <property type="entry name" value="DeoC"/>
    <property type="match status" value="1"/>
</dbReference>
<dbReference type="Gene3D" id="3.20.20.70">
    <property type="entry name" value="Aldolase class I"/>
    <property type="match status" value="1"/>
</dbReference>
<dbReference type="HAMAP" id="MF_00592">
    <property type="entry name" value="DeoC_type2"/>
    <property type="match status" value="1"/>
</dbReference>
<dbReference type="InterPro" id="IPR013785">
    <property type="entry name" value="Aldolase_TIM"/>
</dbReference>
<dbReference type="InterPro" id="IPR011343">
    <property type="entry name" value="DeoC"/>
</dbReference>
<dbReference type="InterPro" id="IPR002915">
    <property type="entry name" value="DeoC/FbaB/LacD_aldolase"/>
</dbReference>
<dbReference type="InterPro" id="IPR023649">
    <property type="entry name" value="DeoC_typeII"/>
</dbReference>
<dbReference type="NCBIfam" id="TIGR00126">
    <property type="entry name" value="deoC"/>
    <property type="match status" value="1"/>
</dbReference>
<dbReference type="PANTHER" id="PTHR10889">
    <property type="entry name" value="DEOXYRIBOSE-PHOSPHATE ALDOLASE"/>
    <property type="match status" value="1"/>
</dbReference>
<dbReference type="PANTHER" id="PTHR10889:SF3">
    <property type="entry name" value="DEOXYRIBOSE-PHOSPHATE ALDOLASE"/>
    <property type="match status" value="1"/>
</dbReference>
<dbReference type="Pfam" id="PF01791">
    <property type="entry name" value="DeoC"/>
    <property type="match status" value="1"/>
</dbReference>
<dbReference type="PIRSF" id="PIRSF001357">
    <property type="entry name" value="DeoC"/>
    <property type="match status" value="1"/>
</dbReference>
<dbReference type="SMART" id="SM01133">
    <property type="entry name" value="DeoC"/>
    <property type="match status" value="1"/>
</dbReference>
<dbReference type="SUPFAM" id="SSF51569">
    <property type="entry name" value="Aldolase"/>
    <property type="match status" value="1"/>
</dbReference>
<accession>B8E6P4</accession>
<keyword id="KW-0963">Cytoplasm</keyword>
<keyword id="KW-0456">Lyase</keyword>
<keyword id="KW-0704">Schiff base</keyword>
<gene>
    <name evidence="1" type="primary">deoC</name>
    <name type="ordered locus">Sbal223_1140</name>
</gene>
<proteinExistence type="inferred from homology"/>
<sequence>MTDLKKAAQRAIELMDLTTLNDDDTDQKVIDLCHKAKTAAGNTAAICIYPRFIPIARKTLDEIGAEDIQIATVTNFPHGNDDIAIAVLETRAAVAYGADEVDVVFPYRALMEGNETIGFELVKACKEACGEVLLKVIIESGVLADPALIRRASELSIDAGADFIKTSTGKVPVNATLEAAEIMLTVISEKNTQVGFKPAGGVRDAAQAAEFLGVAERILGADWVSPRTFRFGASSLLNSLLHTLELADAPKPTQGY</sequence>
<reference key="1">
    <citation type="submission" date="2008-12" db="EMBL/GenBank/DDBJ databases">
        <title>Complete sequence of chromosome of Shewanella baltica OS223.</title>
        <authorList>
            <consortium name="US DOE Joint Genome Institute"/>
            <person name="Lucas S."/>
            <person name="Copeland A."/>
            <person name="Lapidus A."/>
            <person name="Glavina del Rio T."/>
            <person name="Dalin E."/>
            <person name="Tice H."/>
            <person name="Bruce D."/>
            <person name="Goodwin L."/>
            <person name="Pitluck S."/>
            <person name="Chertkov O."/>
            <person name="Meincke L."/>
            <person name="Brettin T."/>
            <person name="Detter J.C."/>
            <person name="Han C."/>
            <person name="Kuske C.R."/>
            <person name="Larimer F."/>
            <person name="Land M."/>
            <person name="Hauser L."/>
            <person name="Kyrpides N."/>
            <person name="Ovchinnikova G."/>
            <person name="Brettar I."/>
            <person name="Rodrigues J."/>
            <person name="Konstantinidis K."/>
            <person name="Tiedje J."/>
        </authorList>
    </citation>
    <scope>NUCLEOTIDE SEQUENCE [LARGE SCALE GENOMIC DNA]</scope>
    <source>
        <strain>OS223</strain>
    </source>
</reference>
<organism>
    <name type="scientific">Shewanella baltica (strain OS223)</name>
    <dbReference type="NCBI Taxonomy" id="407976"/>
    <lineage>
        <taxon>Bacteria</taxon>
        <taxon>Pseudomonadati</taxon>
        <taxon>Pseudomonadota</taxon>
        <taxon>Gammaproteobacteria</taxon>
        <taxon>Alteromonadales</taxon>
        <taxon>Shewanellaceae</taxon>
        <taxon>Shewanella</taxon>
    </lineage>
</organism>
<feature type="chain" id="PRO_1000146965" description="Deoxyribose-phosphate aldolase">
    <location>
        <begin position="1"/>
        <end position="256"/>
    </location>
</feature>
<feature type="active site" description="Proton donor/acceptor" evidence="1">
    <location>
        <position position="102"/>
    </location>
</feature>
<feature type="active site" description="Schiff-base intermediate with acetaldehyde" evidence="1">
    <location>
        <position position="165"/>
    </location>
</feature>
<feature type="active site" description="Proton donor/acceptor" evidence="1">
    <location>
        <position position="197"/>
    </location>
</feature>
<protein>
    <recommendedName>
        <fullName evidence="1">Deoxyribose-phosphate aldolase</fullName>
        <shortName evidence="1">DERA</shortName>
        <ecNumber evidence="1">4.1.2.4</ecNumber>
    </recommendedName>
    <alternativeName>
        <fullName evidence="1">2-deoxy-D-ribose 5-phosphate aldolase</fullName>
    </alternativeName>
    <alternativeName>
        <fullName evidence="1">Phosphodeoxyriboaldolase</fullName>
        <shortName evidence="1">Deoxyriboaldolase</shortName>
    </alternativeName>
</protein>
<name>DEOC_SHEB2</name>
<evidence type="ECO:0000255" key="1">
    <source>
        <dbReference type="HAMAP-Rule" id="MF_00592"/>
    </source>
</evidence>